<proteinExistence type="inferred from homology"/>
<sequence>MARLAAFDMDGTLLMPDHHLGEKTLSTLARLRERDITLTFATGRHALEMQHILGALSLDAYLITGNGTRVHSLEGELLHRDDLPADVAELVLYQQWDTRASMHIFNDDGWFTGKEIPALLQAFVYSGFRYQIIDVKKMPLGRVTKICFCGGHDDLTRLQIQLYEALGERAHLCFSATDCLEVLPVGCNKGAALTVLTQHLGLSLRDCMAFGDAMNDREMLGSVGSGFIMGNAMPQLRAELPHLPVIGHCRNQAVSHYLTHWLDYPHLPYSPE</sequence>
<comment type="function">
    <text evidence="1">Catalyzes the hydrolysis of 4-amino-2-methyl-5-hydroxymethylpyrimidine pyrophosphate (HMP-PP) to 4-amino-2-methyl-5-hydroxymethylpyrimidine phosphate (HMP-P).</text>
</comment>
<comment type="catalytic activity">
    <reaction evidence="1">
        <text>4-amino-2-methyl-5-(diphosphooxymethyl)pyrimidine + H2O = 4-amino-2-methyl-5-(phosphooxymethyl)pyrimidine + phosphate + H(+)</text>
        <dbReference type="Rhea" id="RHEA:27914"/>
        <dbReference type="ChEBI" id="CHEBI:15377"/>
        <dbReference type="ChEBI" id="CHEBI:15378"/>
        <dbReference type="ChEBI" id="CHEBI:43474"/>
        <dbReference type="ChEBI" id="CHEBI:57841"/>
        <dbReference type="ChEBI" id="CHEBI:58354"/>
    </reaction>
</comment>
<comment type="cofactor">
    <cofactor evidence="1">
        <name>Mg(2+)</name>
        <dbReference type="ChEBI" id="CHEBI:18420"/>
    </cofactor>
</comment>
<comment type="similarity">
    <text evidence="1">Belongs to the HAD-like hydrolase superfamily. Cof family.</text>
</comment>
<dbReference type="EC" id="3.6.1.-" evidence="1"/>
<dbReference type="EMBL" id="CU928145">
    <property type="protein sequence ID" value="CAU96333.1"/>
    <property type="molecule type" value="Genomic_DNA"/>
</dbReference>
<dbReference type="RefSeq" id="WP_001342064.1">
    <property type="nucleotide sequence ID" value="NC_011748.1"/>
</dbReference>
<dbReference type="SMR" id="B7L683"/>
<dbReference type="KEGG" id="eck:EC55989_0460"/>
<dbReference type="HOGENOM" id="CLU_044146_5_2_6"/>
<dbReference type="Proteomes" id="UP000000746">
    <property type="component" value="Chromosome"/>
</dbReference>
<dbReference type="GO" id="GO:0002145">
    <property type="term" value="F:4-amino-5-hydroxymethyl-2-methylpyrimidine diphosphatase activity"/>
    <property type="evidence" value="ECO:0007669"/>
    <property type="project" value="RHEA"/>
</dbReference>
<dbReference type="GO" id="GO:0000287">
    <property type="term" value="F:magnesium ion binding"/>
    <property type="evidence" value="ECO:0000250"/>
    <property type="project" value="UniProtKB"/>
</dbReference>
<dbReference type="GO" id="GO:0016791">
    <property type="term" value="F:phosphatase activity"/>
    <property type="evidence" value="ECO:0000250"/>
    <property type="project" value="UniProtKB"/>
</dbReference>
<dbReference type="CDD" id="cd07516">
    <property type="entry name" value="HAD_Pase"/>
    <property type="match status" value="1"/>
</dbReference>
<dbReference type="FunFam" id="3.30.1240.10:FF:000002">
    <property type="entry name" value="HMP-PP phosphatase"/>
    <property type="match status" value="1"/>
</dbReference>
<dbReference type="Gene3D" id="3.30.1240.10">
    <property type="match status" value="1"/>
</dbReference>
<dbReference type="Gene3D" id="3.40.50.1000">
    <property type="entry name" value="HAD superfamily/HAD-like"/>
    <property type="match status" value="1"/>
</dbReference>
<dbReference type="HAMAP" id="MF_01847">
    <property type="entry name" value="HMP_PP_phosphat"/>
    <property type="match status" value="1"/>
</dbReference>
<dbReference type="InterPro" id="IPR000150">
    <property type="entry name" value="Cof"/>
</dbReference>
<dbReference type="InterPro" id="IPR036412">
    <property type="entry name" value="HAD-like_sf"/>
</dbReference>
<dbReference type="InterPro" id="IPR006379">
    <property type="entry name" value="HAD-SF_hydro_IIB"/>
</dbReference>
<dbReference type="InterPro" id="IPR023214">
    <property type="entry name" value="HAD_sf"/>
</dbReference>
<dbReference type="InterPro" id="IPR023938">
    <property type="entry name" value="HMP-PP_phosphatase"/>
</dbReference>
<dbReference type="NCBIfam" id="TIGR00099">
    <property type="entry name" value="Cof-subfamily"/>
    <property type="match status" value="1"/>
</dbReference>
<dbReference type="NCBIfam" id="TIGR01484">
    <property type="entry name" value="HAD-SF-IIB"/>
    <property type="match status" value="1"/>
</dbReference>
<dbReference type="NCBIfam" id="NF011705">
    <property type="entry name" value="PRK15126.1"/>
    <property type="match status" value="1"/>
</dbReference>
<dbReference type="PANTHER" id="PTHR47267">
    <property type="match status" value="1"/>
</dbReference>
<dbReference type="PANTHER" id="PTHR47267:SF2">
    <property type="entry name" value="HMP-PP PHOSPHATASE"/>
    <property type="match status" value="1"/>
</dbReference>
<dbReference type="Pfam" id="PF08282">
    <property type="entry name" value="Hydrolase_3"/>
    <property type="match status" value="1"/>
</dbReference>
<dbReference type="SFLD" id="SFLDG01140">
    <property type="entry name" value="C2.B:_Phosphomannomutase_and_P"/>
    <property type="match status" value="1"/>
</dbReference>
<dbReference type="SFLD" id="SFLDS00003">
    <property type="entry name" value="Haloacid_Dehalogenase"/>
    <property type="match status" value="1"/>
</dbReference>
<dbReference type="SUPFAM" id="SSF56784">
    <property type="entry name" value="HAD-like"/>
    <property type="match status" value="1"/>
</dbReference>
<dbReference type="PROSITE" id="PS01228">
    <property type="entry name" value="COF_1"/>
    <property type="match status" value="1"/>
</dbReference>
<dbReference type="PROSITE" id="PS01229">
    <property type="entry name" value="COF_2"/>
    <property type="match status" value="1"/>
</dbReference>
<reference key="1">
    <citation type="journal article" date="2009" name="PLoS Genet.">
        <title>Organised genome dynamics in the Escherichia coli species results in highly diverse adaptive paths.</title>
        <authorList>
            <person name="Touchon M."/>
            <person name="Hoede C."/>
            <person name="Tenaillon O."/>
            <person name="Barbe V."/>
            <person name="Baeriswyl S."/>
            <person name="Bidet P."/>
            <person name="Bingen E."/>
            <person name="Bonacorsi S."/>
            <person name="Bouchier C."/>
            <person name="Bouvet O."/>
            <person name="Calteau A."/>
            <person name="Chiapello H."/>
            <person name="Clermont O."/>
            <person name="Cruveiller S."/>
            <person name="Danchin A."/>
            <person name="Diard M."/>
            <person name="Dossat C."/>
            <person name="Karoui M.E."/>
            <person name="Frapy E."/>
            <person name="Garry L."/>
            <person name="Ghigo J.M."/>
            <person name="Gilles A.M."/>
            <person name="Johnson J."/>
            <person name="Le Bouguenec C."/>
            <person name="Lescat M."/>
            <person name="Mangenot S."/>
            <person name="Martinez-Jehanne V."/>
            <person name="Matic I."/>
            <person name="Nassif X."/>
            <person name="Oztas S."/>
            <person name="Petit M.A."/>
            <person name="Pichon C."/>
            <person name="Rouy Z."/>
            <person name="Ruf C.S."/>
            <person name="Schneider D."/>
            <person name="Tourret J."/>
            <person name="Vacherie B."/>
            <person name="Vallenet D."/>
            <person name="Medigue C."/>
            <person name="Rocha E.P.C."/>
            <person name="Denamur E."/>
        </authorList>
    </citation>
    <scope>NUCLEOTIDE SEQUENCE [LARGE SCALE GENOMIC DNA]</scope>
    <source>
        <strain>55989 / EAEC</strain>
    </source>
</reference>
<evidence type="ECO:0000255" key="1">
    <source>
        <dbReference type="HAMAP-Rule" id="MF_01847"/>
    </source>
</evidence>
<organism>
    <name type="scientific">Escherichia coli (strain 55989 / EAEC)</name>
    <dbReference type="NCBI Taxonomy" id="585055"/>
    <lineage>
        <taxon>Bacteria</taxon>
        <taxon>Pseudomonadati</taxon>
        <taxon>Pseudomonadota</taxon>
        <taxon>Gammaproteobacteria</taxon>
        <taxon>Enterobacterales</taxon>
        <taxon>Enterobacteriaceae</taxon>
        <taxon>Escherichia</taxon>
    </lineage>
</organism>
<gene>
    <name evidence="1" type="primary">cof</name>
    <name type="ordered locus">EC55989_0460</name>
</gene>
<name>COF_ECO55</name>
<feature type="chain" id="PRO_1000188497" description="HMP-PP phosphatase">
    <location>
        <begin position="1"/>
        <end position="272"/>
    </location>
</feature>
<feature type="active site" description="Nucleophile" evidence="1">
    <location>
        <position position="8"/>
    </location>
</feature>
<feature type="binding site" evidence="1">
    <location>
        <position position="8"/>
    </location>
    <ligand>
        <name>Mg(2+)</name>
        <dbReference type="ChEBI" id="CHEBI:18420"/>
    </ligand>
</feature>
<feature type="binding site" evidence="1">
    <location>
        <position position="10"/>
    </location>
    <ligand>
        <name>Mg(2+)</name>
        <dbReference type="ChEBI" id="CHEBI:18420"/>
    </ligand>
</feature>
<feature type="binding site" evidence="1">
    <location>
        <position position="212"/>
    </location>
    <ligand>
        <name>Mg(2+)</name>
        <dbReference type="ChEBI" id="CHEBI:18420"/>
    </ligand>
</feature>
<keyword id="KW-0378">Hydrolase</keyword>
<keyword id="KW-0460">Magnesium</keyword>
<keyword id="KW-0479">Metal-binding</keyword>
<keyword id="KW-1185">Reference proteome</keyword>
<accession>B7L683</accession>
<protein>
    <recommendedName>
        <fullName evidence="1">HMP-PP phosphatase</fullName>
        <ecNumber evidence="1">3.6.1.-</ecNumber>
    </recommendedName>
</protein>